<name>ILVD_RHOCA</name>
<accession>P31874</accession>
<proteinExistence type="inferred from homology"/>
<feature type="chain" id="PRO_0000103500" description="Dihydroxy-acid dehydratase">
    <location>
        <begin position="1" status="less than"/>
        <end position="46" status="greater than"/>
    </location>
</feature>
<feature type="non-terminal residue">
    <location>
        <position position="1"/>
    </location>
</feature>
<feature type="non-terminal residue">
    <location>
        <position position="46"/>
    </location>
</feature>
<sequence>RTTEAFSTGNRYKEVDRDRQAGVIRSAEHAFSKDGGLAVLFGNIAE</sequence>
<protein>
    <recommendedName>
        <fullName>Dihydroxy-acid dehydratase</fullName>
        <shortName>DAD</shortName>
        <ecNumber evidence="2">4.2.1.9</ecNumber>
    </recommendedName>
</protein>
<keyword id="KW-0001">2Fe-2S</keyword>
<keyword id="KW-0028">Amino-acid biosynthesis</keyword>
<keyword id="KW-0100">Branched-chain amino acid biosynthesis</keyword>
<keyword id="KW-0408">Iron</keyword>
<keyword id="KW-0411">Iron-sulfur</keyword>
<keyword id="KW-0456">Lyase</keyword>
<keyword id="KW-0460">Magnesium</keyword>
<keyword id="KW-0479">Metal-binding</keyword>
<gene>
    <name type="primary">ilvD</name>
</gene>
<evidence type="ECO:0000250" key="1">
    <source>
        <dbReference type="UniProtKB" id="P05791"/>
    </source>
</evidence>
<evidence type="ECO:0000250" key="2">
    <source>
        <dbReference type="UniProtKB" id="P9WKJ5"/>
    </source>
</evidence>
<evidence type="ECO:0000305" key="3"/>
<reference key="1">
    <citation type="journal article" date="1992" name="FEMS Microbiol. Lett.">
        <title>DNA gyrase activities from Rhodobacter capsulatus: analysis of target(s) of coumarins and cloning of the gyrB locus.</title>
        <authorList>
            <person name="Kranz R.G."/>
            <person name="Beckman D.L."/>
            <person name="Foster-Hartnett D."/>
        </authorList>
    </citation>
    <scope>NUCLEOTIDE SEQUENCE [GENOMIC DNA]</scope>
</reference>
<organism>
    <name type="scientific">Rhodobacter capsulatus</name>
    <name type="common">Rhodopseudomonas capsulata</name>
    <dbReference type="NCBI Taxonomy" id="1061"/>
    <lineage>
        <taxon>Bacteria</taxon>
        <taxon>Pseudomonadati</taxon>
        <taxon>Pseudomonadota</taxon>
        <taxon>Alphaproteobacteria</taxon>
        <taxon>Rhodobacterales</taxon>
        <taxon>Rhodobacter group</taxon>
        <taxon>Rhodobacter</taxon>
    </lineage>
</organism>
<comment type="function">
    <text evidence="2">Functions in the biosynthesis of branched-chain amino acids. Catalyzes the dehydration of (2R,3R)-2,3-dihydroxy-3-methylpentanoate (2,3-dihydroxy-3-methylvalerate) into 2-oxo-3-methylpentanoate (2-oxo-3-methylvalerate) and of (2R)-2,3-dihydroxy-3-methylbutanoate (2,3-dihydroxyisovalerate) into 2-oxo-3-methylbutanoate (2-oxoisovalerate), the penultimate precursor to L-isoleucine and L-valine, respectively. Is specific for the (R) isomer of 2,3-dihydroxy-3-methylbutanoate, with no catalytic activity against the (S) isomer.</text>
</comment>
<comment type="catalytic activity">
    <reaction evidence="2">
        <text>(2R)-2,3-dihydroxy-3-methylbutanoate = 3-methyl-2-oxobutanoate + H2O</text>
        <dbReference type="Rhea" id="RHEA:24809"/>
        <dbReference type="ChEBI" id="CHEBI:11851"/>
        <dbReference type="ChEBI" id="CHEBI:15377"/>
        <dbReference type="ChEBI" id="CHEBI:49072"/>
        <dbReference type="EC" id="4.2.1.9"/>
    </reaction>
    <physiologicalReaction direction="left-to-right" evidence="2">
        <dbReference type="Rhea" id="RHEA:24810"/>
    </physiologicalReaction>
</comment>
<comment type="catalytic activity">
    <reaction evidence="1">
        <text>(2R,3R)-2,3-dihydroxy-3-methylpentanoate = (S)-3-methyl-2-oxopentanoate + H2O</text>
        <dbReference type="Rhea" id="RHEA:27694"/>
        <dbReference type="ChEBI" id="CHEBI:15377"/>
        <dbReference type="ChEBI" id="CHEBI:35146"/>
        <dbReference type="ChEBI" id="CHEBI:49258"/>
        <dbReference type="EC" id="4.2.1.9"/>
    </reaction>
    <physiologicalReaction direction="left-to-right" evidence="1">
        <dbReference type="Rhea" id="RHEA:27695"/>
    </physiologicalReaction>
</comment>
<comment type="cofactor">
    <cofactor evidence="2">
        <name>[2Fe-2S] cluster</name>
        <dbReference type="ChEBI" id="CHEBI:190135"/>
    </cofactor>
    <text evidence="2">Binds 1 [2Fe-2S] cluster per subunit. This cluster acts as a Lewis acid cofactor.</text>
</comment>
<comment type="cofactor">
    <cofactor evidence="2">
        <name>Mg(2+)</name>
        <dbReference type="ChEBI" id="CHEBI:18420"/>
    </cofactor>
</comment>
<comment type="pathway">
    <text evidence="2">Amino-acid biosynthesis; L-isoleucine biosynthesis; L-isoleucine from 2-oxobutanoate: step 3/4.</text>
</comment>
<comment type="pathway">
    <text evidence="2">Amino-acid biosynthesis; L-valine biosynthesis; L-valine from pyruvate: step 3/4.</text>
</comment>
<comment type="subunit">
    <text evidence="2">Homodimer.</text>
</comment>
<comment type="similarity">
    <text evidence="3">Belongs to the IlvD/Edd family.</text>
</comment>
<dbReference type="EC" id="4.2.1.9" evidence="2"/>
<dbReference type="UniPathway" id="UPA00047">
    <property type="reaction ID" value="UER00057"/>
</dbReference>
<dbReference type="UniPathway" id="UPA00049">
    <property type="reaction ID" value="UER00061"/>
</dbReference>
<dbReference type="GO" id="GO:0051537">
    <property type="term" value="F:2 iron, 2 sulfur cluster binding"/>
    <property type="evidence" value="ECO:0007669"/>
    <property type="project" value="UniProtKB-KW"/>
</dbReference>
<dbReference type="GO" id="GO:0004160">
    <property type="term" value="F:dihydroxy-acid dehydratase activity"/>
    <property type="evidence" value="ECO:0007669"/>
    <property type="project" value="UniProtKB-EC"/>
</dbReference>
<dbReference type="GO" id="GO:0046872">
    <property type="term" value="F:metal ion binding"/>
    <property type="evidence" value="ECO:0007669"/>
    <property type="project" value="UniProtKB-KW"/>
</dbReference>
<dbReference type="GO" id="GO:0009097">
    <property type="term" value="P:isoleucine biosynthetic process"/>
    <property type="evidence" value="ECO:0007669"/>
    <property type="project" value="UniProtKB-UniPathway"/>
</dbReference>
<dbReference type="GO" id="GO:0009099">
    <property type="term" value="P:L-valine biosynthetic process"/>
    <property type="evidence" value="ECO:0007669"/>
    <property type="project" value="UniProtKB-UniPathway"/>
</dbReference>